<keyword id="KW-0903">Direct protein sequencing</keyword>
<keyword id="KW-1015">Disulfide bond</keyword>
<keyword id="KW-0325">Glycoprotein</keyword>
<keyword id="KW-0646">Protease inhibitor</keyword>
<keyword id="KW-0677">Repeat</keyword>
<keyword id="KW-0964">Secreted</keyword>
<keyword id="KW-0722">Serine protease inhibitor</keyword>
<comment type="subcellular location">
    <subcellularLocation>
        <location>Secreted</location>
    </subcellularLocation>
</comment>
<comment type="domain">
    <text>Avian ovomucoid consists of three homologous, tandem Kazal family inhibitory domains.</text>
</comment>
<sequence>IAIVDCSDYPKPVCSLEYMPLCGSDSKTYSNKCDFCNAVVDSNGTLTLSHFGKC</sequence>
<proteinExistence type="evidence at protein level"/>
<name>IOVO_GYPCO</name>
<evidence type="ECO:0000255" key="1">
    <source>
        <dbReference type="PROSITE-ProRule" id="PRU00798"/>
    </source>
</evidence>
<reference key="1">
    <citation type="journal article" date="1987" name="Biochemistry">
        <title>Ovomucoid third domains from 100 avian species: isolation, sequences, and hypervariability of enzyme-inhibitor contact residues.</title>
        <authorList>
            <person name="Laskowski M. Jr."/>
            <person name="Kato I."/>
            <person name="Ardelt W."/>
            <person name="Cook J."/>
            <person name="Denton A."/>
            <person name="Empie M.W."/>
            <person name="Kohr W.J."/>
            <person name="Park S.J."/>
            <person name="Parks K."/>
            <person name="Schatzley B.L."/>
            <person name="Schoenberger O.L."/>
            <person name="Tashiro M."/>
            <person name="Vichot G."/>
            <person name="Whatley H.E."/>
            <person name="Wieczorek A."/>
            <person name="Wieczorek M."/>
        </authorList>
    </citation>
    <scope>PROTEIN SEQUENCE</scope>
</reference>
<accession>P68374</accession>
<accession>P05578</accession>
<organism>
    <name type="scientific">Gyps coprotheres</name>
    <name type="common">Cape vulture</name>
    <name type="synonym">Vultur coprotheres</name>
    <dbReference type="NCBI Taxonomy" id="8966"/>
    <lineage>
        <taxon>Eukaryota</taxon>
        <taxon>Metazoa</taxon>
        <taxon>Chordata</taxon>
        <taxon>Craniata</taxon>
        <taxon>Vertebrata</taxon>
        <taxon>Euteleostomi</taxon>
        <taxon>Archelosauria</taxon>
        <taxon>Archosauria</taxon>
        <taxon>Dinosauria</taxon>
        <taxon>Saurischia</taxon>
        <taxon>Theropoda</taxon>
        <taxon>Coelurosauria</taxon>
        <taxon>Aves</taxon>
        <taxon>Neognathae</taxon>
        <taxon>Neoaves</taxon>
        <taxon>Telluraves</taxon>
        <taxon>Accipitrimorphae</taxon>
        <taxon>Accipitriformes</taxon>
        <taxon>Accipitridae</taxon>
        <taxon>Accipitrinae</taxon>
        <taxon>Gyps</taxon>
    </lineage>
</organism>
<dbReference type="PIR" id="A31439">
    <property type="entry name" value="A31439"/>
</dbReference>
<dbReference type="SMR" id="P68374"/>
<dbReference type="GO" id="GO:0005576">
    <property type="term" value="C:extracellular region"/>
    <property type="evidence" value="ECO:0007669"/>
    <property type="project" value="UniProtKB-SubCell"/>
</dbReference>
<dbReference type="GO" id="GO:0004867">
    <property type="term" value="F:serine-type endopeptidase inhibitor activity"/>
    <property type="evidence" value="ECO:0007669"/>
    <property type="project" value="UniProtKB-KW"/>
</dbReference>
<dbReference type="CDD" id="cd00104">
    <property type="entry name" value="KAZAL_FS"/>
    <property type="match status" value="1"/>
</dbReference>
<dbReference type="FunFam" id="3.30.60.30:FF:000037">
    <property type="entry name" value="Ovomucoid"/>
    <property type="match status" value="1"/>
</dbReference>
<dbReference type="Gene3D" id="3.30.60.30">
    <property type="match status" value="1"/>
</dbReference>
<dbReference type="InterPro" id="IPR051597">
    <property type="entry name" value="Bifunctional_prot_inhibitor"/>
</dbReference>
<dbReference type="InterPro" id="IPR002350">
    <property type="entry name" value="Kazal_dom"/>
</dbReference>
<dbReference type="InterPro" id="IPR036058">
    <property type="entry name" value="Kazal_dom_sf"/>
</dbReference>
<dbReference type="InterPro" id="IPR001239">
    <property type="entry name" value="Prot_inh_Kazal-m"/>
</dbReference>
<dbReference type="PANTHER" id="PTHR47729:SF1">
    <property type="entry name" value="OVOMUCOID-LIKE-RELATED"/>
    <property type="match status" value="1"/>
</dbReference>
<dbReference type="PANTHER" id="PTHR47729">
    <property type="entry name" value="SERINE PEPTIDASE INHIBITOR, KAZAL TYPE 2, TANDEM DUPLICATE 1-RELATED"/>
    <property type="match status" value="1"/>
</dbReference>
<dbReference type="Pfam" id="PF00050">
    <property type="entry name" value="Kazal_1"/>
    <property type="match status" value="1"/>
</dbReference>
<dbReference type="PRINTS" id="PR00290">
    <property type="entry name" value="KAZALINHBTR"/>
</dbReference>
<dbReference type="SMART" id="SM00280">
    <property type="entry name" value="KAZAL"/>
    <property type="match status" value="1"/>
</dbReference>
<dbReference type="SUPFAM" id="SSF100895">
    <property type="entry name" value="Kazal-type serine protease inhibitors"/>
    <property type="match status" value="1"/>
</dbReference>
<dbReference type="PROSITE" id="PS00282">
    <property type="entry name" value="KAZAL_1"/>
    <property type="match status" value="1"/>
</dbReference>
<dbReference type="PROSITE" id="PS51465">
    <property type="entry name" value="KAZAL_2"/>
    <property type="match status" value="1"/>
</dbReference>
<feature type="chain" id="PRO_0000073123" description="Ovomucoid">
    <location>
        <begin position="1" status="less than"/>
        <end position="54" status="greater than"/>
    </location>
</feature>
<feature type="domain" description="Kazal-like" evidence="1">
    <location>
        <begin position="4"/>
        <end position="54"/>
    </location>
</feature>
<feature type="site" description="Reactive bond 3">
    <location>
        <begin position="16"/>
        <end position="17"/>
    </location>
</feature>
<feature type="glycosylation site" description="N-linked (GlcNAc...) asparagine">
    <location>
        <position position="43"/>
    </location>
</feature>
<feature type="disulfide bond">
    <location>
        <begin position="6"/>
        <end position="36"/>
    </location>
</feature>
<feature type="disulfide bond">
    <location>
        <begin position="14"/>
        <end position="33"/>
    </location>
</feature>
<feature type="disulfide bond">
    <location>
        <begin position="22"/>
        <end position="54"/>
    </location>
</feature>
<feature type="non-terminal residue">
    <location>
        <position position="1"/>
    </location>
</feature>
<feature type="non-terminal residue">
    <location>
        <position position="54"/>
    </location>
</feature>
<protein>
    <recommendedName>
        <fullName>Ovomucoid</fullName>
    </recommendedName>
</protein>